<sequence length="212" mass="24466">MQNRPIIIGVTGGSGGGKTSVSRAILSHFPDEKISMIEHDSYYKDQSHLTFEERVKTNYDHPFAFDTDLMIEQIKELLAGRPVDIPTYDYTEHTRSSKTYRQEPQDVFIVEGILVLEDKRLRDLMDIKIFVDTDDDVRIIRRIKRDMEERGRSLDSVINQYLGVVKPMYHQFIESTKRYADIVIPEGVSNTVAIDLLTTKIAKILEEARNSK</sequence>
<name>URK_STRPI</name>
<proteinExistence type="inferred from homology"/>
<dbReference type="EC" id="2.7.1.48" evidence="1"/>
<dbReference type="EMBL" id="CP000936">
    <property type="protein sequence ID" value="ACA36975.1"/>
    <property type="molecule type" value="Genomic_DNA"/>
</dbReference>
<dbReference type="RefSeq" id="WP_001181378.1">
    <property type="nucleotide sequence ID" value="NC_010380.1"/>
</dbReference>
<dbReference type="SMR" id="B1IC10"/>
<dbReference type="GeneID" id="45653496"/>
<dbReference type="KEGG" id="spv:SPH_1326"/>
<dbReference type="HOGENOM" id="CLU_021278_1_2_9"/>
<dbReference type="UniPathway" id="UPA00574">
    <property type="reaction ID" value="UER00637"/>
</dbReference>
<dbReference type="UniPathway" id="UPA00579">
    <property type="reaction ID" value="UER00640"/>
</dbReference>
<dbReference type="Proteomes" id="UP000002163">
    <property type="component" value="Chromosome"/>
</dbReference>
<dbReference type="GO" id="GO:0005737">
    <property type="term" value="C:cytoplasm"/>
    <property type="evidence" value="ECO:0007669"/>
    <property type="project" value="UniProtKB-SubCell"/>
</dbReference>
<dbReference type="GO" id="GO:0005524">
    <property type="term" value="F:ATP binding"/>
    <property type="evidence" value="ECO:0007669"/>
    <property type="project" value="UniProtKB-UniRule"/>
</dbReference>
<dbReference type="GO" id="GO:0043771">
    <property type="term" value="F:cytidine kinase activity"/>
    <property type="evidence" value="ECO:0007669"/>
    <property type="project" value="RHEA"/>
</dbReference>
<dbReference type="GO" id="GO:0004849">
    <property type="term" value="F:uridine kinase activity"/>
    <property type="evidence" value="ECO:0007669"/>
    <property type="project" value="UniProtKB-UniRule"/>
</dbReference>
<dbReference type="GO" id="GO:0044211">
    <property type="term" value="P:CTP salvage"/>
    <property type="evidence" value="ECO:0007669"/>
    <property type="project" value="UniProtKB-UniRule"/>
</dbReference>
<dbReference type="GO" id="GO:0044206">
    <property type="term" value="P:UMP salvage"/>
    <property type="evidence" value="ECO:0007669"/>
    <property type="project" value="UniProtKB-UniRule"/>
</dbReference>
<dbReference type="CDD" id="cd02023">
    <property type="entry name" value="UMPK"/>
    <property type="match status" value="1"/>
</dbReference>
<dbReference type="Gene3D" id="3.40.50.300">
    <property type="entry name" value="P-loop containing nucleotide triphosphate hydrolases"/>
    <property type="match status" value="1"/>
</dbReference>
<dbReference type="HAMAP" id="MF_00551">
    <property type="entry name" value="Uridine_kinase"/>
    <property type="match status" value="1"/>
</dbReference>
<dbReference type="InterPro" id="IPR027417">
    <property type="entry name" value="P-loop_NTPase"/>
</dbReference>
<dbReference type="InterPro" id="IPR006083">
    <property type="entry name" value="PRK/URK"/>
</dbReference>
<dbReference type="InterPro" id="IPR026008">
    <property type="entry name" value="Uridine_kinase"/>
</dbReference>
<dbReference type="InterPro" id="IPR000764">
    <property type="entry name" value="Uridine_kinase-like"/>
</dbReference>
<dbReference type="NCBIfam" id="NF004018">
    <property type="entry name" value="PRK05480.1"/>
    <property type="match status" value="1"/>
</dbReference>
<dbReference type="NCBIfam" id="TIGR00235">
    <property type="entry name" value="udk"/>
    <property type="match status" value="1"/>
</dbReference>
<dbReference type="PANTHER" id="PTHR10285">
    <property type="entry name" value="URIDINE KINASE"/>
    <property type="match status" value="1"/>
</dbReference>
<dbReference type="Pfam" id="PF00485">
    <property type="entry name" value="PRK"/>
    <property type="match status" value="1"/>
</dbReference>
<dbReference type="PRINTS" id="PR00988">
    <property type="entry name" value="URIDINKINASE"/>
</dbReference>
<dbReference type="SUPFAM" id="SSF52540">
    <property type="entry name" value="P-loop containing nucleoside triphosphate hydrolases"/>
    <property type="match status" value="1"/>
</dbReference>
<comment type="catalytic activity">
    <reaction evidence="1">
        <text>uridine + ATP = UMP + ADP + H(+)</text>
        <dbReference type="Rhea" id="RHEA:16825"/>
        <dbReference type="ChEBI" id="CHEBI:15378"/>
        <dbReference type="ChEBI" id="CHEBI:16704"/>
        <dbReference type="ChEBI" id="CHEBI:30616"/>
        <dbReference type="ChEBI" id="CHEBI:57865"/>
        <dbReference type="ChEBI" id="CHEBI:456216"/>
        <dbReference type="EC" id="2.7.1.48"/>
    </reaction>
</comment>
<comment type="catalytic activity">
    <reaction evidence="1">
        <text>cytidine + ATP = CMP + ADP + H(+)</text>
        <dbReference type="Rhea" id="RHEA:24674"/>
        <dbReference type="ChEBI" id="CHEBI:15378"/>
        <dbReference type="ChEBI" id="CHEBI:17562"/>
        <dbReference type="ChEBI" id="CHEBI:30616"/>
        <dbReference type="ChEBI" id="CHEBI:60377"/>
        <dbReference type="ChEBI" id="CHEBI:456216"/>
        <dbReference type="EC" id="2.7.1.48"/>
    </reaction>
</comment>
<comment type="pathway">
    <text evidence="1">Pyrimidine metabolism; CTP biosynthesis via salvage pathway; CTP from cytidine: step 1/3.</text>
</comment>
<comment type="pathway">
    <text evidence="1">Pyrimidine metabolism; UMP biosynthesis via salvage pathway; UMP from uridine: step 1/1.</text>
</comment>
<comment type="subcellular location">
    <subcellularLocation>
        <location evidence="1">Cytoplasm</location>
    </subcellularLocation>
</comment>
<comment type="similarity">
    <text evidence="1">Belongs to the uridine kinase family.</text>
</comment>
<evidence type="ECO:0000255" key="1">
    <source>
        <dbReference type="HAMAP-Rule" id="MF_00551"/>
    </source>
</evidence>
<reference key="1">
    <citation type="journal article" date="2010" name="Genome Biol.">
        <title>Structure and dynamics of the pan-genome of Streptococcus pneumoniae and closely related species.</title>
        <authorList>
            <person name="Donati C."/>
            <person name="Hiller N.L."/>
            <person name="Tettelin H."/>
            <person name="Muzzi A."/>
            <person name="Croucher N.J."/>
            <person name="Angiuoli S.V."/>
            <person name="Oggioni M."/>
            <person name="Dunning Hotopp J.C."/>
            <person name="Hu F.Z."/>
            <person name="Riley D.R."/>
            <person name="Covacci A."/>
            <person name="Mitchell T.J."/>
            <person name="Bentley S.D."/>
            <person name="Kilian M."/>
            <person name="Ehrlich G.D."/>
            <person name="Rappuoli R."/>
            <person name="Moxon E.R."/>
            <person name="Masignani V."/>
        </authorList>
    </citation>
    <scope>NUCLEOTIDE SEQUENCE [LARGE SCALE GENOMIC DNA]</scope>
    <source>
        <strain>Hungary19A-6</strain>
    </source>
</reference>
<feature type="chain" id="PRO_1000129092" description="Uridine kinase">
    <location>
        <begin position="1"/>
        <end position="212"/>
    </location>
</feature>
<feature type="binding site" evidence="1">
    <location>
        <begin position="12"/>
        <end position="19"/>
    </location>
    <ligand>
        <name>ATP</name>
        <dbReference type="ChEBI" id="CHEBI:30616"/>
    </ligand>
</feature>
<organism>
    <name type="scientific">Streptococcus pneumoniae (strain Hungary19A-6)</name>
    <dbReference type="NCBI Taxonomy" id="487214"/>
    <lineage>
        <taxon>Bacteria</taxon>
        <taxon>Bacillati</taxon>
        <taxon>Bacillota</taxon>
        <taxon>Bacilli</taxon>
        <taxon>Lactobacillales</taxon>
        <taxon>Streptococcaceae</taxon>
        <taxon>Streptococcus</taxon>
    </lineage>
</organism>
<protein>
    <recommendedName>
        <fullName evidence="1">Uridine kinase</fullName>
        <ecNumber evidence="1">2.7.1.48</ecNumber>
    </recommendedName>
    <alternativeName>
        <fullName evidence="1">Cytidine monophosphokinase</fullName>
    </alternativeName>
    <alternativeName>
        <fullName evidence="1">Uridine monophosphokinase</fullName>
    </alternativeName>
</protein>
<accession>B1IC10</accession>
<gene>
    <name evidence="1" type="primary">udk</name>
    <name type="ordered locus">SPH_1326</name>
</gene>
<keyword id="KW-0067">ATP-binding</keyword>
<keyword id="KW-0963">Cytoplasm</keyword>
<keyword id="KW-0418">Kinase</keyword>
<keyword id="KW-0547">Nucleotide-binding</keyword>
<keyword id="KW-0808">Transferase</keyword>